<dbReference type="EMBL" id="DS231698">
    <property type="protein sequence ID" value="KNA98380.1"/>
    <property type="molecule type" value="Genomic_DNA"/>
</dbReference>
<dbReference type="RefSeq" id="XP_018236426.1">
    <property type="nucleotide sequence ID" value="XM_018380207.1"/>
</dbReference>
<dbReference type="GeneID" id="28944919"/>
<dbReference type="KEGG" id="fox:FOXG_02746"/>
<dbReference type="OMA" id="GQKARCC"/>
<dbReference type="OrthoDB" id="83714at110618"/>
<dbReference type="Proteomes" id="UP000009097">
    <property type="component" value="Unassembled WGS sequence"/>
</dbReference>
<dbReference type="GO" id="GO:0005576">
    <property type="term" value="C:extracellular region"/>
    <property type="evidence" value="ECO:0007669"/>
    <property type="project" value="UniProtKB-KW"/>
</dbReference>
<dbReference type="CDD" id="cd23508">
    <property type="entry name" value="hydrophobin_II"/>
    <property type="match status" value="1"/>
</dbReference>
<dbReference type="Gene3D" id="3.20.120.10">
    <property type="entry name" value="Hydrophobin"/>
    <property type="match status" value="1"/>
</dbReference>
<dbReference type="InterPro" id="IPR010636">
    <property type="entry name" value="Cerato-ulmin_hydrophobin"/>
</dbReference>
<dbReference type="InterPro" id="IPR036686">
    <property type="entry name" value="Hydrophobin_sf"/>
</dbReference>
<dbReference type="PANTHER" id="PTHR42341">
    <property type="entry name" value="HYDROPHOBIN"/>
    <property type="match status" value="1"/>
</dbReference>
<dbReference type="PANTHER" id="PTHR42341:SF1">
    <property type="entry name" value="HYDROPHOBIN"/>
    <property type="match status" value="1"/>
</dbReference>
<dbReference type="Pfam" id="PF06766">
    <property type="entry name" value="Hydrophobin_2"/>
    <property type="match status" value="1"/>
</dbReference>
<dbReference type="SUPFAM" id="SSF101751">
    <property type="entry name" value="Hydrophobin II, HfbII"/>
    <property type="match status" value="1"/>
</dbReference>
<comment type="function">
    <text evidence="3 5">Aerial growth, conidiation, and dispersal of filamentous fungi in the environment rely upon a capability of their secreting small amphipathic proteins called hydrophobins (HPBs) with low sequence identity. Class I can self-assemble into an outermost layer of rodlet bundles on aerial cell surfaces, conferring cellular hydrophobicity that supports fungal growth, development and dispersal; whereas Class II form highly ordered films at water-air interfaces through intermolecular interactions but contribute nothing to the rodlet structure (Probable). FOXG_02746 is a class II hydrophobin that is likely required for plant colonization (PubMed:36986302).</text>
</comment>
<comment type="subunit">
    <text evidence="1">Homodimer (By similarity). Homodimers further self-assemble to form highly ordered films at water-air interfaces through intermolecular interactions (By similarity).</text>
</comment>
<comment type="subcellular location">
    <subcellularLocation>
        <location evidence="1">Secreted</location>
    </subcellularLocation>
    <subcellularLocation>
        <location evidence="1">Secreted</location>
        <location evidence="1">Cell wall</location>
    </subcellularLocation>
</comment>
<comment type="induction">
    <text evidence="3">Expression occurs during infection and is directly regulated by the transcription factor FTF2.</text>
</comment>
<comment type="similarity">
    <text evidence="5">Belongs to the cerato-ulmin hydrophobin family.</text>
</comment>
<feature type="signal peptide" evidence="2">
    <location>
        <begin position="1"/>
        <end position="17"/>
    </location>
</feature>
<feature type="chain" id="PRO_5039913609" description="Class II hydrophobin FOXG_02746">
    <location>
        <begin position="18"/>
        <end position="100"/>
    </location>
</feature>
<feature type="disulfide bond" evidence="1">
    <location>
        <begin position="29"/>
        <end position="79"/>
    </location>
</feature>
<feature type="disulfide bond" evidence="1">
    <location>
        <begin position="40"/>
        <end position="70"/>
    </location>
</feature>
<feature type="disulfide bond" evidence="1">
    <location>
        <begin position="41"/>
        <end position="53"/>
    </location>
</feature>
<feature type="disulfide bond" evidence="1">
    <location>
        <begin position="80"/>
        <end position="92"/>
    </location>
</feature>
<accession>A0A0J9UJP6</accession>
<gene>
    <name type="ORF">FOXG_02746</name>
</gene>
<keyword id="KW-0134">Cell wall</keyword>
<keyword id="KW-1015">Disulfide bond</keyword>
<keyword id="KW-1185">Reference proteome</keyword>
<keyword id="KW-0964">Secreted</keyword>
<keyword id="KW-0732">Signal</keyword>
<keyword id="KW-0843">Virulence</keyword>
<evidence type="ECO:0000250" key="1">
    <source>
        <dbReference type="UniProtKB" id="P79073"/>
    </source>
</evidence>
<evidence type="ECO:0000255" key="2"/>
<evidence type="ECO:0000269" key="3">
    <source>
    </source>
</evidence>
<evidence type="ECO:0000303" key="4">
    <source>
    </source>
</evidence>
<evidence type="ECO:0000305" key="5"/>
<reference key="1">
    <citation type="journal article" date="2010" name="Nature">
        <title>Comparative genomics reveals mobile pathogenicity chromosomes in Fusarium.</title>
        <authorList>
            <person name="Ma L.-J."/>
            <person name="van der Does H.C."/>
            <person name="Borkovich K.A."/>
            <person name="Coleman J.J."/>
            <person name="Daboussi M.-J."/>
            <person name="Di Pietro A."/>
            <person name="Dufresne M."/>
            <person name="Freitag M."/>
            <person name="Grabherr M."/>
            <person name="Henrissat B."/>
            <person name="Houterman P.M."/>
            <person name="Kang S."/>
            <person name="Shim W.-B."/>
            <person name="Woloshuk C."/>
            <person name="Xie X."/>
            <person name="Xu J.-R."/>
            <person name="Antoniw J."/>
            <person name="Baker S.E."/>
            <person name="Bluhm B.H."/>
            <person name="Breakspear A."/>
            <person name="Brown D.W."/>
            <person name="Butchko R.A.E."/>
            <person name="Chapman S."/>
            <person name="Coulson R."/>
            <person name="Coutinho P.M."/>
            <person name="Danchin E.G.J."/>
            <person name="Diener A."/>
            <person name="Gale L.R."/>
            <person name="Gardiner D.M."/>
            <person name="Goff S."/>
            <person name="Hammond-Kosack K.E."/>
            <person name="Hilburn K."/>
            <person name="Hua-Van A."/>
            <person name="Jonkers W."/>
            <person name="Kazan K."/>
            <person name="Kodira C.D."/>
            <person name="Koehrsen M."/>
            <person name="Kumar L."/>
            <person name="Lee Y.-H."/>
            <person name="Li L."/>
            <person name="Manners J.M."/>
            <person name="Miranda-Saavedra D."/>
            <person name="Mukherjee M."/>
            <person name="Park G."/>
            <person name="Park J."/>
            <person name="Park S.-Y."/>
            <person name="Proctor R.H."/>
            <person name="Regev A."/>
            <person name="Ruiz-Roldan M.C."/>
            <person name="Sain D."/>
            <person name="Sakthikumar S."/>
            <person name="Sykes S."/>
            <person name="Schwartz D.C."/>
            <person name="Turgeon B.G."/>
            <person name="Wapinski I."/>
            <person name="Yoder O."/>
            <person name="Young S."/>
            <person name="Zeng Q."/>
            <person name="Zhou S."/>
            <person name="Galagan J."/>
            <person name="Cuomo C.A."/>
            <person name="Kistler H.C."/>
            <person name="Rep M."/>
        </authorList>
    </citation>
    <scope>NUCLEOTIDE SEQUENCE [LARGE SCALE GENOMIC DNA]</scope>
    <source>
        <strain>4287 / CBS 123668 / FGSC 9935 / NRRL 34936</strain>
    </source>
</reference>
<reference key="2">
    <citation type="journal article" date="2023" name="Pathogens">
        <title>The Role of the Fusarium oxysporum FTF2 Transcription Factor in Host Colonization and Virulence in Common Bean Plants (Phaseolus vulgaris L.).</title>
        <authorList>
            <person name="Casado-Del Castillo V."/>
            <person name="Benito E.P."/>
            <person name="Diaz-Minguez J.M."/>
        </authorList>
    </citation>
    <scope>INDUCTION</scope>
    <scope>FUNCTION</scope>
</reference>
<name>HYD46_FUSO4</name>
<sequence length="100" mass="10273">MQFYTIVSLFLAGTAYALPATSANGYEACPSGGLFGNPQCCSLNLVGVLSGDCRAPTKTPNSAKEFQAICAESGQKARCCGLSEILELGAFCQKPVGVSA</sequence>
<proteinExistence type="evidence at transcript level"/>
<protein>
    <recommendedName>
        <fullName evidence="4">Class II hydrophobin FOXG_02746</fullName>
    </recommendedName>
</protein>
<organism>
    <name type="scientific">Fusarium oxysporum f. sp. lycopersici (strain 4287 / CBS 123668 / FGSC 9935 / NRRL 34936)</name>
    <name type="common">Fusarium vascular wilt of tomato</name>
    <dbReference type="NCBI Taxonomy" id="426428"/>
    <lineage>
        <taxon>Eukaryota</taxon>
        <taxon>Fungi</taxon>
        <taxon>Dikarya</taxon>
        <taxon>Ascomycota</taxon>
        <taxon>Pezizomycotina</taxon>
        <taxon>Sordariomycetes</taxon>
        <taxon>Hypocreomycetidae</taxon>
        <taxon>Hypocreales</taxon>
        <taxon>Nectriaceae</taxon>
        <taxon>Fusarium</taxon>
        <taxon>Fusarium oxysporum species complex</taxon>
    </lineage>
</organism>